<evidence type="ECO:0000255" key="1">
    <source>
        <dbReference type="HAMAP-Rule" id="MF_01657"/>
    </source>
</evidence>
<organism>
    <name type="scientific">Burkholderia lata (strain ATCC 17760 / DSM 23089 / LMG 22485 / NCIMB 9086 / R18194 / 383)</name>
    <dbReference type="NCBI Taxonomy" id="482957"/>
    <lineage>
        <taxon>Bacteria</taxon>
        <taxon>Pseudomonadati</taxon>
        <taxon>Pseudomonadota</taxon>
        <taxon>Betaproteobacteria</taxon>
        <taxon>Burkholderiales</taxon>
        <taxon>Burkholderiaceae</taxon>
        <taxon>Burkholderia</taxon>
        <taxon>Burkholderia cepacia complex</taxon>
    </lineage>
</organism>
<accession>Q397R0</accession>
<protein>
    <recommendedName>
        <fullName evidence="1">Acetaldehyde dehydrogenase 1</fullName>
        <ecNumber evidence="1">1.2.1.10</ecNumber>
    </recommendedName>
    <alternativeName>
        <fullName evidence="1">Acetaldehyde dehydrogenase [acetylating] 1</fullName>
    </alternativeName>
</protein>
<comment type="catalytic activity">
    <reaction evidence="1">
        <text>acetaldehyde + NAD(+) + CoA = acetyl-CoA + NADH + H(+)</text>
        <dbReference type="Rhea" id="RHEA:23288"/>
        <dbReference type="ChEBI" id="CHEBI:15343"/>
        <dbReference type="ChEBI" id="CHEBI:15378"/>
        <dbReference type="ChEBI" id="CHEBI:57287"/>
        <dbReference type="ChEBI" id="CHEBI:57288"/>
        <dbReference type="ChEBI" id="CHEBI:57540"/>
        <dbReference type="ChEBI" id="CHEBI:57945"/>
        <dbReference type="EC" id="1.2.1.10"/>
    </reaction>
</comment>
<comment type="similarity">
    <text evidence="1">Belongs to the acetaldehyde dehydrogenase family.</text>
</comment>
<keyword id="KW-0058">Aromatic hydrocarbons catabolism</keyword>
<keyword id="KW-0520">NAD</keyword>
<keyword id="KW-0560">Oxidoreductase</keyword>
<dbReference type="EC" id="1.2.1.10" evidence="1"/>
<dbReference type="EMBL" id="CP000152">
    <property type="protein sequence ID" value="ABB11301.1"/>
    <property type="molecule type" value="Genomic_DNA"/>
</dbReference>
<dbReference type="RefSeq" id="WP_011354792.1">
    <property type="nucleotide sequence ID" value="NC_007511.1"/>
</dbReference>
<dbReference type="SMR" id="Q397R0"/>
<dbReference type="GeneID" id="45097537"/>
<dbReference type="KEGG" id="bur:Bcep18194_B1187"/>
<dbReference type="PATRIC" id="fig|482957.22.peg.4857"/>
<dbReference type="HOGENOM" id="CLU_062208_0_0_4"/>
<dbReference type="Proteomes" id="UP000002705">
    <property type="component" value="Chromosome 2"/>
</dbReference>
<dbReference type="GO" id="GO:0008774">
    <property type="term" value="F:acetaldehyde dehydrogenase (acetylating) activity"/>
    <property type="evidence" value="ECO:0007669"/>
    <property type="project" value="UniProtKB-UniRule"/>
</dbReference>
<dbReference type="GO" id="GO:0051287">
    <property type="term" value="F:NAD binding"/>
    <property type="evidence" value="ECO:0007669"/>
    <property type="project" value="UniProtKB-UniRule"/>
</dbReference>
<dbReference type="GO" id="GO:0009056">
    <property type="term" value="P:catabolic process"/>
    <property type="evidence" value="ECO:0007669"/>
    <property type="project" value="UniProtKB-KW"/>
</dbReference>
<dbReference type="CDD" id="cd23933">
    <property type="entry name" value="ALDH_C"/>
    <property type="match status" value="1"/>
</dbReference>
<dbReference type="Gene3D" id="3.30.360.10">
    <property type="entry name" value="Dihydrodipicolinate Reductase, domain 2"/>
    <property type="match status" value="1"/>
</dbReference>
<dbReference type="Gene3D" id="3.40.50.720">
    <property type="entry name" value="NAD(P)-binding Rossmann-like Domain"/>
    <property type="match status" value="1"/>
</dbReference>
<dbReference type="HAMAP" id="MF_01657">
    <property type="entry name" value="Ac_ald_DH_ac"/>
    <property type="match status" value="1"/>
</dbReference>
<dbReference type="InterPro" id="IPR003361">
    <property type="entry name" value="Acetaldehyde_dehydrogenase"/>
</dbReference>
<dbReference type="InterPro" id="IPR015426">
    <property type="entry name" value="Acetylaldehyde_DH_C"/>
</dbReference>
<dbReference type="InterPro" id="IPR036291">
    <property type="entry name" value="NAD(P)-bd_dom_sf"/>
</dbReference>
<dbReference type="InterPro" id="IPR000534">
    <property type="entry name" value="Semialdehyde_DH_NAD-bd"/>
</dbReference>
<dbReference type="NCBIfam" id="TIGR03215">
    <property type="entry name" value="ac_ald_DH_ac"/>
    <property type="match status" value="1"/>
</dbReference>
<dbReference type="NCBIfam" id="NF006157">
    <property type="entry name" value="PRK08300.1"/>
    <property type="match status" value="1"/>
</dbReference>
<dbReference type="Pfam" id="PF09290">
    <property type="entry name" value="AcetDehyd-dimer"/>
    <property type="match status" value="1"/>
</dbReference>
<dbReference type="Pfam" id="PF01118">
    <property type="entry name" value="Semialdhyde_dh"/>
    <property type="match status" value="1"/>
</dbReference>
<dbReference type="PIRSF" id="PIRSF015689">
    <property type="entry name" value="Actaldh_dh_actl"/>
    <property type="match status" value="1"/>
</dbReference>
<dbReference type="SMART" id="SM00859">
    <property type="entry name" value="Semialdhyde_dh"/>
    <property type="match status" value="1"/>
</dbReference>
<dbReference type="SUPFAM" id="SSF55347">
    <property type="entry name" value="Glyceraldehyde-3-phosphate dehydrogenase-like, C-terminal domain"/>
    <property type="match status" value="1"/>
</dbReference>
<dbReference type="SUPFAM" id="SSF51735">
    <property type="entry name" value="NAD(P)-binding Rossmann-fold domains"/>
    <property type="match status" value="1"/>
</dbReference>
<sequence length="319" mass="33598">MKSKAKVAIIGPGNIGTDLMIKVMRHGTHIEMGAMIGVDPKSDGLARAQRMGVAISSDGIDGLLALDVFKEIDIVFDATSAGAHKRHNDVLQAHGVQVIDLTPAAIGPYVIPAINLESENAPNMNMVTCGGQATIPMVAAISRVTKVHYAEIVASISSKSAGPGTRANIDEFTETTRKAIEQLGGASRGKAIIILNPAEPPLIMRDTVFALSDPADQGKIEDSIAQMVASVQAYVPGYRLKQKVQFDVITADKPLNVPGVGLKHGLKTSVFLEVEGAAHYLPSYAGNLDIMTSAALACGDMMARRRMAAGIARGHKEAV</sequence>
<feature type="chain" id="PRO_0000387638" description="Acetaldehyde dehydrogenase 1">
    <location>
        <begin position="1"/>
        <end position="319"/>
    </location>
</feature>
<feature type="active site" description="Acyl-thioester intermediate" evidence="1">
    <location>
        <position position="129"/>
    </location>
</feature>
<feature type="binding site" evidence="1">
    <location>
        <begin position="160"/>
        <end position="168"/>
    </location>
    <ligand>
        <name>NAD(+)</name>
        <dbReference type="ChEBI" id="CHEBI:57540"/>
    </ligand>
</feature>
<feature type="binding site" evidence="1">
    <location>
        <position position="287"/>
    </location>
    <ligand>
        <name>NAD(+)</name>
        <dbReference type="ChEBI" id="CHEBI:57540"/>
    </ligand>
</feature>
<name>ACDH1_BURL3</name>
<gene>
    <name type="ordered locus">Bcep18194_B1187</name>
</gene>
<proteinExistence type="inferred from homology"/>
<reference key="1">
    <citation type="submission" date="2005-10" db="EMBL/GenBank/DDBJ databases">
        <title>Complete sequence of chromosome 2 of Burkholderia sp. 383.</title>
        <authorList>
            <consortium name="US DOE Joint Genome Institute"/>
            <person name="Copeland A."/>
            <person name="Lucas S."/>
            <person name="Lapidus A."/>
            <person name="Barry K."/>
            <person name="Detter J.C."/>
            <person name="Glavina T."/>
            <person name="Hammon N."/>
            <person name="Israni S."/>
            <person name="Pitluck S."/>
            <person name="Chain P."/>
            <person name="Malfatti S."/>
            <person name="Shin M."/>
            <person name="Vergez L."/>
            <person name="Schmutz J."/>
            <person name="Larimer F."/>
            <person name="Land M."/>
            <person name="Kyrpides N."/>
            <person name="Lykidis A."/>
            <person name="Richardson P."/>
        </authorList>
    </citation>
    <scope>NUCLEOTIDE SEQUENCE [LARGE SCALE GENOMIC DNA]</scope>
    <source>
        <strain>ATCC 17760 / DSM 23089 / LMG 22485 / NCIMB 9086 / R18194 / 383</strain>
    </source>
</reference>